<protein>
    <recommendedName>
        <fullName evidence="1">Small ribosomal subunit biogenesis GTPase RsgA</fullName>
        <ecNumber evidence="1">3.6.1.-</ecNumber>
    </recommendedName>
</protein>
<organism>
    <name type="scientific">Bordetella bronchiseptica (strain ATCC BAA-588 / NCTC 13252 / RB50)</name>
    <name type="common">Alcaligenes bronchisepticus</name>
    <dbReference type="NCBI Taxonomy" id="257310"/>
    <lineage>
        <taxon>Bacteria</taxon>
        <taxon>Pseudomonadati</taxon>
        <taxon>Pseudomonadota</taxon>
        <taxon>Betaproteobacteria</taxon>
        <taxon>Burkholderiales</taxon>
        <taxon>Alcaligenaceae</taxon>
        <taxon>Bordetella</taxon>
    </lineage>
</organism>
<reference key="1">
    <citation type="journal article" date="2003" name="Nat. Genet.">
        <title>Comparative analysis of the genome sequences of Bordetella pertussis, Bordetella parapertussis and Bordetella bronchiseptica.</title>
        <authorList>
            <person name="Parkhill J."/>
            <person name="Sebaihia M."/>
            <person name="Preston A."/>
            <person name="Murphy L.D."/>
            <person name="Thomson N.R."/>
            <person name="Harris D.E."/>
            <person name="Holden M.T.G."/>
            <person name="Churcher C.M."/>
            <person name="Bentley S.D."/>
            <person name="Mungall K.L."/>
            <person name="Cerdeno-Tarraga A.-M."/>
            <person name="Temple L."/>
            <person name="James K.D."/>
            <person name="Harris B."/>
            <person name="Quail M.A."/>
            <person name="Achtman M."/>
            <person name="Atkin R."/>
            <person name="Baker S."/>
            <person name="Basham D."/>
            <person name="Bason N."/>
            <person name="Cherevach I."/>
            <person name="Chillingworth T."/>
            <person name="Collins M."/>
            <person name="Cronin A."/>
            <person name="Davis P."/>
            <person name="Doggett J."/>
            <person name="Feltwell T."/>
            <person name="Goble A."/>
            <person name="Hamlin N."/>
            <person name="Hauser H."/>
            <person name="Holroyd S."/>
            <person name="Jagels K."/>
            <person name="Leather S."/>
            <person name="Moule S."/>
            <person name="Norberczak H."/>
            <person name="O'Neil S."/>
            <person name="Ormond D."/>
            <person name="Price C."/>
            <person name="Rabbinowitsch E."/>
            <person name="Rutter S."/>
            <person name="Sanders M."/>
            <person name="Saunders D."/>
            <person name="Seeger K."/>
            <person name="Sharp S."/>
            <person name="Simmonds M."/>
            <person name="Skelton J."/>
            <person name="Squares R."/>
            <person name="Squares S."/>
            <person name="Stevens K."/>
            <person name="Unwin L."/>
            <person name="Whitehead S."/>
            <person name="Barrell B.G."/>
            <person name="Maskell D.J."/>
        </authorList>
    </citation>
    <scope>NUCLEOTIDE SEQUENCE [LARGE SCALE GENOMIC DNA]</scope>
    <source>
        <strain>ATCC BAA-588 / NCTC 13252 / RB50</strain>
    </source>
</reference>
<comment type="function">
    <text evidence="1">One of several proteins that assist in the late maturation steps of the functional core of the 30S ribosomal subunit. Helps release RbfA from mature subunits. May play a role in the assembly of ribosomal proteins into the subunit. Circularly permuted GTPase that catalyzes slow GTP hydrolysis, GTPase activity is stimulated by the 30S ribosomal subunit.</text>
</comment>
<comment type="cofactor">
    <cofactor evidence="1">
        <name>Zn(2+)</name>
        <dbReference type="ChEBI" id="CHEBI:29105"/>
    </cofactor>
    <text evidence="1">Binds 1 zinc ion per subunit.</text>
</comment>
<comment type="subunit">
    <text evidence="1">Monomer. Associates with 30S ribosomal subunit, binds 16S rRNA.</text>
</comment>
<comment type="subcellular location">
    <subcellularLocation>
        <location evidence="1">Cytoplasm</location>
    </subcellularLocation>
</comment>
<comment type="similarity">
    <text evidence="1">Belongs to the TRAFAC class YlqF/YawG GTPase family. RsgA subfamily.</text>
</comment>
<gene>
    <name evidence="1" type="primary">rsgA</name>
    <name type="ordered locus">BB3440</name>
</gene>
<keyword id="KW-0963">Cytoplasm</keyword>
<keyword id="KW-0342">GTP-binding</keyword>
<keyword id="KW-0378">Hydrolase</keyword>
<keyword id="KW-0479">Metal-binding</keyword>
<keyword id="KW-0547">Nucleotide-binding</keyword>
<keyword id="KW-0690">Ribosome biogenesis</keyword>
<keyword id="KW-0694">RNA-binding</keyword>
<keyword id="KW-0699">rRNA-binding</keyword>
<keyword id="KW-0862">Zinc</keyword>
<dbReference type="EC" id="3.6.1.-" evidence="1"/>
<dbReference type="EMBL" id="BX640447">
    <property type="protein sequence ID" value="CAE33932.1"/>
    <property type="molecule type" value="Genomic_DNA"/>
</dbReference>
<dbReference type="RefSeq" id="WP_003813309.1">
    <property type="nucleotide sequence ID" value="NC_002927.3"/>
</dbReference>
<dbReference type="SMR" id="P67679"/>
<dbReference type="GeneID" id="93203427"/>
<dbReference type="KEGG" id="bbr:BB3440"/>
<dbReference type="eggNOG" id="COG1162">
    <property type="taxonomic scope" value="Bacteria"/>
</dbReference>
<dbReference type="HOGENOM" id="CLU_033617_2_0_4"/>
<dbReference type="Proteomes" id="UP000001027">
    <property type="component" value="Chromosome"/>
</dbReference>
<dbReference type="GO" id="GO:0005737">
    <property type="term" value="C:cytoplasm"/>
    <property type="evidence" value="ECO:0007669"/>
    <property type="project" value="UniProtKB-SubCell"/>
</dbReference>
<dbReference type="GO" id="GO:0005525">
    <property type="term" value="F:GTP binding"/>
    <property type="evidence" value="ECO:0007669"/>
    <property type="project" value="UniProtKB-UniRule"/>
</dbReference>
<dbReference type="GO" id="GO:0003924">
    <property type="term" value="F:GTPase activity"/>
    <property type="evidence" value="ECO:0007669"/>
    <property type="project" value="UniProtKB-UniRule"/>
</dbReference>
<dbReference type="GO" id="GO:0046872">
    <property type="term" value="F:metal ion binding"/>
    <property type="evidence" value="ECO:0007669"/>
    <property type="project" value="UniProtKB-KW"/>
</dbReference>
<dbReference type="GO" id="GO:0019843">
    <property type="term" value="F:rRNA binding"/>
    <property type="evidence" value="ECO:0007669"/>
    <property type="project" value="UniProtKB-KW"/>
</dbReference>
<dbReference type="GO" id="GO:0042274">
    <property type="term" value="P:ribosomal small subunit biogenesis"/>
    <property type="evidence" value="ECO:0007669"/>
    <property type="project" value="UniProtKB-UniRule"/>
</dbReference>
<dbReference type="CDD" id="cd04466">
    <property type="entry name" value="S1_YloQ_GTPase"/>
    <property type="match status" value="1"/>
</dbReference>
<dbReference type="CDD" id="cd01854">
    <property type="entry name" value="YjeQ_EngC"/>
    <property type="match status" value="1"/>
</dbReference>
<dbReference type="Gene3D" id="2.40.50.140">
    <property type="entry name" value="Nucleic acid-binding proteins"/>
    <property type="match status" value="1"/>
</dbReference>
<dbReference type="Gene3D" id="3.40.50.300">
    <property type="entry name" value="P-loop containing nucleotide triphosphate hydrolases"/>
    <property type="match status" value="1"/>
</dbReference>
<dbReference type="Gene3D" id="1.10.40.50">
    <property type="entry name" value="Probable gtpase engc, domain 3"/>
    <property type="match status" value="1"/>
</dbReference>
<dbReference type="HAMAP" id="MF_01820">
    <property type="entry name" value="GTPase_RsgA"/>
    <property type="match status" value="1"/>
</dbReference>
<dbReference type="InterPro" id="IPR030378">
    <property type="entry name" value="G_CP_dom"/>
</dbReference>
<dbReference type="InterPro" id="IPR012340">
    <property type="entry name" value="NA-bd_OB-fold"/>
</dbReference>
<dbReference type="InterPro" id="IPR027417">
    <property type="entry name" value="P-loop_NTPase"/>
</dbReference>
<dbReference type="InterPro" id="IPR004881">
    <property type="entry name" value="Ribosome_biogen_GTPase_RsgA"/>
</dbReference>
<dbReference type="InterPro" id="IPR010914">
    <property type="entry name" value="RsgA_GTPase_dom"/>
</dbReference>
<dbReference type="InterPro" id="IPR031944">
    <property type="entry name" value="RsgA_N"/>
</dbReference>
<dbReference type="NCBIfam" id="TIGR00157">
    <property type="entry name" value="ribosome small subunit-dependent GTPase A"/>
    <property type="match status" value="1"/>
</dbReference>
<dbReference type="PANTHER" id="PTHR32120">
    <property type="entry name" value="SMALL RIBOSOMAL SUBUNIT BIOGENESIS GTPASE RSGA"/>
    <property type="match status" value="1"/>
</dbReference>
<dbReference type="PANTHER" id="PTHR32120:SF11">
    <property type="entry name" value="SMALL RIBOSOMAL SUBUNIT BIOGENESIS GTPASE RSGA 1, MITOCHONDRIAL-RELATED"/>
    <property type="match status" value="1"/>
</dbReference>
<dbReference type="Pfam" id="PF03193">
    <property type="entry name" value="RsgA_GTPase"/>
    <property type="match status" value="1"/>
</dbReference>
<dbReference type="SUPFAM" id="SSF50249">
    <property type="entry name" value="Nucleic acid-binding proteins"/>
    <property type="match status" value="1"/>
</dbReference>
<dbReference type="SUPFAM" id="SSF52540">
    <property type="entry name" value="P-loop containing nucleoside triphosphate hydrolases"/>
    <property type="match status" value="1"/>
</dbReference>
<dbReference type="PROSITE" id="PS50936">
    <property type="entry name" value="ENGC_GTPASE"/>
    <property type="match status" value="1"/>
</dbReference>
<dbReference type="PROSITE" id="PS51721">
    <property type="entry name" value="G_CP"/>
    <property type="match status" value="1"/>
</dbReference>
<proteinExistence type="inferred from homology"/>
<evidence type="ECO:0000255" key="1">
    <source>
        <dbReference type="HAMAP-Rule" id="MF_01820"/>
    </source>
</evidence>
<evidence type="ECO:0000255" key="2">
    <source>
        <dbReference type="PROSITE-ProRule" id="PRU01058"/>
    </source>
</evidence>
<accession>P67679</accession>
<accession>Q7VVH5</accession>
<accession>Q7W9T6</accession>
<accession>Q7WGX1</accession>
<name>RSGA_BORBR</name>
<feature type="chain" id="PRO_0000171469" description="Small ribosomal subunit biogenesis GTPase RsgA">
    <location>
        <begin position="1"/>
        <end position="300"/>
    </location>
</feature>
<feature type="domain" description="CP-type G" evidence="2">
    <location>
        <begin position="69"/>
        <end position="231"/>
    </location>
</feature>
<feature type="binding site" evidence="1">
    <location>
        <begin position="119"/>
        <end position="122"/>
    </location>
    <ligand>
        <name>GTP</name>
        <dbReference type="ChEBI" id="CHEBI:37565"/>
    </ligand>
</feature>
<feature type="binding site" evidence="1">
    <location>
        <begin position="172"/>
        <end position="180"/>
    </location>
    <ligand>
        <name>GTP</name>
        <dbReference type="ChEBI" id="CHEBI:37565"/>
    </ligand>
</feature>
<feature type="binding site" evidence="1">
    <location>
        <position position="255"/>
    </location>
    <ligand>
        <name>Zn(2+)</name>
        <dbReference type="ChEBI" id="CHEBI:29105"/>
    </ligand>
</feature>
<feature type="binding site" evidence="1">
    <location>
        <position position="260"/>
    </location>
    <ligand>
        <name>Zn(2+)</name>
        <dbReference type="ChEBI" id="CHEBI:29105"/>
    </ligand>
</feature>
<feature type="binding site" evidence="1">
    <location>
        <position position="262"/>
    </location>
    <ligand>
        <name>Zn(2+)</name>
        <dbReference type="ChEBI" id="CHEBI:29105"/>
    </ligand>
</feature>
<feature type="binding site" evidence="1">
    <location>
        <position position="268"/>
    </location>
    <ligand>
        <name>Zn(2+)</name>
        <dbReference type="ChEBI" id="CHEBI:29105"/>
    </ligand>
</feature>
<sequence length="300" mass="32737">MSSNQAEGLIIAAHGRHYTVELADGSLRQCFPRGKKNGPAVGDRVRITPQGRDEGAIEAVLPRRNLLFRSDEMRVKQFAANVDQLLIVVAVEPTFADDLTGRSLAGAWSADIEPVIVLNKIDLPNGLDAARARLEPLRRLGVPVIELSAQDHAMVHERLAPRLAGRTSLLLGQSGMGKSTLLNTLVPHAQAATREYSAALDMGRHTTTSTRLYHLPEPGGDLIDSPGFQAFGLQHLNGEQILRGFPEFAPHIEHCRFYNCTHRHEPGCGVLAALQAGQIDAGRYALYLRILDENAAARPY</sequence>